<dbReference type="EMBL" id="BC133295">
    <property type="protein sequence ID" value="AAI33296.1"/>
    <property type="molecule type" value="mRNA"/>
</dbReference>
<dbReference type="RefSeq" id="NP_001075046.1">
    <property type="nucleotide sequence ID" value="NM_001081577.1"/>
</dbReference>
<dbReference type="SMR" id="A2VDL4"/>
<dbReference type="FunCoup" id="A2VDL4">
    <property type="interactions" value="388"/>
</dbReference>
<dbReference type="STRING" id="9913.ENSBTAP00000010206"/>
<dbReference type="GlyCosmos" id="A2VDL4">
    <property type="glycosylation" value="1 site, No reported glycans"/>
</dbReference>
<dbReference type="GlyGen" id="A2VDL4">
    <property type="glycosylation" value="1 site"/>
</dbReference>
<dbReference type="PaxDb" id="9913-ENSBTAP00000010206"/>
<dbReference type="PeptideAtlas" id="A2VDL4"/>
<dbReference type="GeneID" id="326577"/>
<dbReference type="KEGG" id="bta:326577"/>
<dbReference type="CTD" id="6509"/>
<dbReference type="VEuPathDB" id="HostDB:ENSBTAG00000007763"/>
<dbReference type="eggNOG" id="KOG3787">
    <property type="taxonomic scope" value="Eukaryota"/>
</dbReference>
<dbReference type="HOGENOM" id="CLU_019375_3_2_1"/>
<dbReference type="InParanoid" id="A2VDL4"/>
<dbReference type="OMA" id="GIMFVVH"/>
<dbReference type="OrthoDB" id="5877963at2759"/>
<dbReference type="TreeFam" id="TF315206"/>
<dbReference type="Reactome" id="R-BTA-352230">
    <property type="pathway name" value="Amino acid transport across the plasma membrane"/>
</dbReference>
<dbReference type="Proteomes" id="UP000009136">
    <property type="component" value="Chromosome 11"/>
</dbReference>
<dbReference type="Bgee" id="ENSBTAG00000007763">
    <property type="expression patterns" value="Expressed in oviduct epithelium and 106 other cell types or tissues"/>
</dbReference>
<dbReference type="GO" id="GO:0042470">
    <property type="term" value="C:melanosome"/>
    <property type="evidence" value="ECO:0007669"/>
    <property type="project" value="UniProtKB-SubCell"/>
</dbReference>
<dbReference type="GO" id="GO:0005886">
    <property type="term" value="C:plasma membrane"/>
    <property type="evidence" value="ECO:0000318"/>
    <property type="project" value="GO_Central"/>
</dbReference>
<dbReference type="GO" id="GO:0015180">
    <property type="term" value="F:L-alanine transmembrane transporter activity"/>
    <property type="evidence" value="ECO:0000318"/>
    <property type="project" value="GO_Central"/>
</dbReference>
<dbReference type="GO" id="GO:0015183">
    <property type="term" value="F:L-aspartate transmembrane transporter activity"/>
    <property type="evidence" value="ECO:0000318"/>
    <property type="project" value="GO_Central"/>
</dbReference>
<dbReference type="GO" id="GO:0015194">
    <property type="term" value="F:L-serine transmembrane transporter activity"/>
    <property type="evidence" value="ECO:0000318"/>
    <property type="project" value="GO_Central"/>
</dbReference>
<dbReference type="GO" id="GO:0015195">
    <property type="term" value="F:L-threonine transmembrane transporter activity"/>
    <property type="evidence" value="ECO:0000318"/>
    <property type="project" value="GO_Central"/>
</dbReference>
<dbReference type="GO" id="GO:0015293">
    <property type="term" value="F:symporter activity"/>
    <property type="evidence" value="ECO:0007669"/>
    <property type="project" value="UniProtKB-KW"/>
</dbReference>
<dbReference type="GO" id="GO:0015813">
    <property type="term" value="P:L-glutamate transmembrane transport"/>
    <property type="evidence" value="ECO:0000318"/>
    <property type="project" value="GO_Central"/>
</dbReference>
<dbReference type="GO" id="GO:0015825">
    <property type="term" value="P:L-serine transport"/>
    <property type="evidence" value="ECO:0000318"/>
    <property type="project" value="GO_Central"/>
</dbReference>
<dbReference type="FunFam" id="1.10.3860.10:FF:000005">
    <property type="entry name" value="Amino acid transporter"/>
    <property type="match status" value="1"/>
</dbReference>
<dbReference type="Gene3D" id="1.10.3860.10">
    <property type="entry name" value="Sodium:dicarboxylate symporter"/>
    <property type="match status" value="1"/>
</dbReference>
<dbReference type="InterPro" id="IPR050746">
    <property type="entry name" value="DAACS"/>
</dbReference>
<dbReference type="InterPro" id="IPR001991">
    <property type="entry name" value="Na-dicarboxylate_symporter"/>
</dbReference>
<dbReference type="InterPro" id="IPR018107">
    <property type="entry name" value="Na-dicarboxylate_symporter_CS"/>
</dbReference>
<dbReference type="InterPro" id="IPR036458">
    <property type="entry name" value="Na:dicarbo_symporter_sf"/>
</dbReference>
<dbReference type="PANTHER" id="PTHR11958:SF20">
    <property type="entry name" value="NEUTRAL AMINO ACID TRANSPORTER A"/>
    <property type="match status" value="1"/>
</dbReference>
<dbReference type="PANTHER" id="PTHR11958">
    <property type="entry name" value="SODIUM/DICARBOXYLATE SYMPORTER-RELATED"/>
    <property type="match status" value="1"/>
</dbReference>
<dbReference type="Pfam" id="PF00375">
    <property type="entry name" value="SDF"/>
    <property type="match status" value="1"/>
</dbReference>
<dbReference type="PRINTS" id="PR00173">
    <property type="entry name" value="EDTRNSPORT"/>
</dbReference>
<dbReference type="SUPFAM" id="SSF118215">
    <property type="entry name" value="Proton glutamate symport protein"/>
    <property type="match status" value="1"/>
</dbReference>
<dbReference type="PROSITE" id="PS00713">
    <property type="entry name" value="NA_DICARBOXYL_SYMP_1"/>
    <property type="match status" value="1"/>
</dbReference>
<dbReference type="PROSITE" id="PS00714">
    <property type="entry name" value="NA_DICARBOXYL_SYMP_2"/>
    <property type="match status" value="1"/>
</dbReference>
<sequence>MEKSSETNGYLDSAQEGPAAGPGEPGTTARRAGRCAGFLRRHGLVLLTVSGVVAGAGLGAALRGLQLNRTQVTYLAFPGEMLLRMLRMIILPLVVCSLVSGAASLDASSLGRLGGIAIAYFGLTTLGASALAVALAFIIKPGSGSQTLQSSDLGLEDSGPPPVPKETVDSFLDLTRNLFPSNLVVAAFRTYATDYREVTYNTSAGKVTIEKIPIGTEIEGMNILGLVLFALVLGVALKKLGSEGEELIRFFNAFNEATMVLVSWIMWYVPVGIMFLVGSKIVEMKDIIMLVTSLGKYIFTSILGHFIHGGIVLPLIYFVFTRKNPFRFLLGLLTPFATAFATCSSSATLPSMMKCIEENNGVDKRISRFILPIGATVNMDGAAIFQCVAAVFIAQLNNVELRAGQIFTILVTATASSVGAAGVPAGGVLTIAIILEAIGLPTHDLSLILAVDWIVDRTTTVVNVEGDALGAGILHHLNQKAMKRGEQELSEVKVEAIPNSKSEEETSPLVTHPNPTGPAASTPESKESVL</sequence>
<name>SATT_BOVIN</name>
<organism>
    <name type="scientific">Bos taurus</name>
    <name type="common">Bovine</name>
    <dbReference type="NCBI Taxonomy" id="9913"/>
    <lineage>
        <taxon>Eukaryota</taxon>
        <taxon>Metazoa</taxon>
        <taxon>Chordata</taxon>
        <taxon>Craniata</taxon>
        <taxon>Vertebrata</taxon>
        <taxon>Euteleostomi</taxon>
        <taxon>Mammalia</taxon>
        <taxon>Eutheria</taxon>
        <taxon>Laurasiatheria</taxon>
        <taxon>Artiodactyla</taxon>
        <taxon>Ruminantia</taxon>
        <taxon>Pecora</taxon>
        <taxon>Bovidae</taxon>
        <taxon>Bovinae</taxon>
        <taxon>Bos</taxon>
    </lineage>
</organism>
<comment type="function">
    <text evidence="2">Sodium-dependent neutral amino-acid transporter that mediates transport of alanine, serine, cysteine, proline, hydroxyproline and threonine.</text>
</comment>
<comment type="catalytic activity">
    <reaction evidence="2">
        <text>L-threonine(in) + Na(+)(in) = L-threonine(out) + Na(+)(out)</text>
        <dbReference type="Rhea" id="RHEA:69999"/>
        <dbReference type="ChEBI" id="CHEBI:29101"/>
        <dbReference type="ChEBI" id="CHEBI:57926"/>
    </reaction>
</comment>
<comment type="catalytic activity">
    <reaction evidence="2">
        <text>L-serine(in) + Na(+)(in) = L-serine(out) + Na(+)(out)</text>
        <dbReference type="Rhea" id="RHEA:29575"/>
        <dbReference type="ChEBI" id="CHEBI:29101"/>
        <dbReference type="ChEBI" id="CHEBI:33384"/>
    </reaction>
</comment>
<comment type="catalytic activity">
    <reaction evidence="2">
        <text>L-cysteine(in) + Na(+)(in) = L-cysteine(out) + Na(+)(out)</text>
        <dbReference type="Rhea" id="RHEA:68232"/>
        <dbReference type="ChEBI" id="CHEBI:29101"/>
        <dbReference type="ChEBI" id="CHEBI:35235"/>
    </reaction>
</comment>
<comment type="catalytic activity">
    <reaction evidence="2">
        <text>L-alanine(in) + Na(+)(in) = L-alanine(out) + Na(+)(out)</text>
        <dbReference type="Rhea" id="RHEA:29283"/>
        <dbReference type="ChEBI" id="CHEBI:29101"/>
        <dbReference type="ChEBI" id="CHEBI:57972"/>
    </reaction>
</comment>
<comment type="catalytic activity">
    <reaction evidence="2">
        <text>L-proline(in) + Na(+)(in) = L-proline(out) + Na(+)(out)</text>
        <dbReference type="Rhea" id="RHEA:28967"/>
        <dbReference type="ChEBI" id="CHEBI:29101"/>
        <dbReference type="ChEBI" id="CHEBI:60039"/>
    </reaction>
</comment>
<comment type="catalytic activity">
    <reaction evidence="2">
        <text>4-hydroxy-L-proline(in) + Na(+)(in) = 4-hydroxy-L-proline(out) + Na(+)(out)</text>
        <dbReference type="Rhea" id="RHEA:70023"/>
        <dbReference type="ChEBI" id="CHEBI:29101"/>
        <dbReference type="ChEBI" id="CHEBI:58419"/>
    </reaction>
</comment>
<comment type="subcellular location">
    <subcellularLocation>
        <location evidence="2">Membrane</location>
        <topology evidence="3">Multi-pass membrane protein</topology>
    </subcellularLocation>
    <subcellularLocation>
        <location evidence="2">Melanosome</location>
    </subcellularLocation>
    <text evidence="2">Identified by mass spectrometry in melanosome fractions from stage I to stage IV.</text>
</comment>
<comment type="similarity">
    <text evidence="5">Belongs to the dicarboxylate/amino acid:cation symporter (DAACS) (TC 2.A.23) family. SLC1A4 subfamily.</text>
</comment>
<feature type="chain" id="PRO_0000284452" description="Neutral amino acid transporter A">
    <location>
        <begin position="1"/>
        <end position="530"/>
    </location>
</feature>
<feature type="topological domain" description="Cytoplasmic" evidence="3">
    <location>
        <begin position="1"/>
        <end position="41"/>
    </location>
</feature>
<feature type="transmembrane region" description="Helical" evidence="3">
    <location>
        <begin position="42"/>
        <end position="62"/>
    </location>
</feature>
<feature type="transmembrane region" description="Helical" evidence="3">
    <location>
        <begin position="88"/>
        <end position="108"/>
    </location>
</feature>
<feature type="transmembrane region" description="Helical" evidence="3">
    <location>
        <begin position="119"/>
        <end position="139"/>
    </location>
</feature>
<feature type="topological domain" description="Extracellular" evidence="3">
    <location>
        <begin position="140"/>
        <end position="216"/>
    </location>
</feature>
<feature type="transmembrane region" description="Helical" evidence="3">
    <location>
        <begin position="217"/>
        <end position="237"/>
    </location>
</feature>
<feature type="transmembrane region" description="Helical" evidence="3">
    <location>
        <begin position="257"/>
        <end position="277"/>
    </location>
</feature>
<feature type="transmembrane region" description="Helical" evidence="3">
    <location>
        <begin position="298"/>
        <end position="318"/>
    </location>
</feature>
<feature type="transmembrane region" description="Helical" evidence="3">
    <location>
        <begin position="328"/>
        <end position="348"/>
    </location>
</feature>
<feature type="transmembrane region" description="Helical" evidence="3">
    <location>
        <begin position="373"/>
        <end position="393"/>
    </location>
</feature>
<feature type="transmembrane region" description="Helical" evidence="3">
    <location>
        <begin position="418"/>
        <end position="438"/>
    </location>
</feature>
<feature type="region of interest" description="Disordered" evidence="4">
    <location>
        <begin position="1"/>
        <end position="28"/>
    </location>
</feature>
<feature type="region of interest" description="Disordered" evidence="4">
    <location>
        <begin position="488"/>
        <end position="530"/>
    </location>
</feature>
<feature type="compositionally biased region" description="Polar residues" evidence="4">
    <location>
        <begin position="1"/>
        <end position="10"/>
    </location>
</feature>
<feature type="compositionally biased region" description="Low complexity" evidence="4">
    <location>
        <begin position="16"/>
        <end position="28"/>
    </location>
</feature>
<feature type="modified residue" description="N-acetylmethionine" evidence="2">
    <location>
        <position position="1"/>
    </location>
</feature>
<feature type="modified residue" description="Phosphoserine" evidence="2">
    <location>
        <position position="507"/>
    </location>
</feature>
<feature type="modified residue" description="Phosphoserine" evidence="1">
    <location>
        <position position="525"/>
    </location>
</feature>
<feature type="modified residue" description="Phosphoserine" evidence="1">
    <location>
        <position position="528"/>
    </location>
</feature>
<feature type="glycosylation site" description="N-linked (GlcNAc...) asparagine" evidence="3">
    <location>
        <position position="201"/>
    </location>
</feature>
<accession>A2VDL4</accession>
<evidence type="ECO:0000250" key="1">
    <source>
        <dbReference type="UniProtKB" id="O35874"/>
    </source>
</evidence>
<evidence type="ECO:0000250" key="2">
    <source>
        <dbReference type="UniProtKB" id="P43007"/>
    </source>
</evidence>
<evidence type="ECO:0000255" key="3"/>
<evidence type="ECO:0000256" key="4">
    <source>
        <dbReference type="SAM" id="MobiDB-lite"/>
    </source>
</evidence>
<evidence type="ECO:0000305" key="5"/>
<proteinExistence type="evidence at transcript level"/>
<protein>
    <recommendedName>
        <fullName>Neutral amino acid transporter A</fullName>
    </recommendedName>
    <alternativeName>
        <fullName>Solute carrier family 1 member 4</fullName>
    </alternativeName>
</protein>
<reference key="1">
    <citation type="submission" date="2007-02" db="EMBL/GenBank/DDBJ databases">
        <authorList>
            <consortium name="NIH - Mammalian Gene Collection (MGC) project"/>
        </authorList>
    </citation>
    <scope>NUCLEOTIDE SEQUENCE [LARGE SCALE MRNA]</scope>
    <source>
        <strain>Hereford</strain>
        <tissue>Brain cortex</tissue>
    </source>
</reference>
<gene>
    <name type="primary">SLC1A4</name>
    <name type="synonym">SATT</name>
</gene>
<keyword id="KW-0007">Acetylation</keyword>
<keyword id="KW-0325">Glycoprotein</keyword>
<keyword id="KW-0472">Membrane</keyword>
<keyword id="KW-0597">Phosphoprotein</keyword>
<keyword id="KW-1185">Reference proteome</keyword>
<keyword id="KW-0769">Symport</keyword>
<keyword id="KW-0812">Transmembrane</keyword>
<keyword id="KW-1133">Transmembrane helix</keyword>
<keyword id="KW-0813">Transport</keyword>